<gene>
    <name evidence="1" type="primary">acpP</name>
    <name type="ordered locus">BPP3304</name>
</gene>
<accession>Q7W5I7</accession>
<name>ACP_BORPA</name>
<evidence type="ECO:0000255" key="1">
    <source>
        <dbReference type="HAMAP-Rule" id="MF_01217"/>
    </source>
</evidence>
<evidence type="ECO:0000255" key="2">
    <source>
        <dbReference type="PROSITE-ProRule" id="PRU00258"/>
    </source>
</evidence>
<evidence type="ECO:0000305" key="3"/>
<sequence length="79" mass="8885">MESIEQRVKKIVAEQLGVNEAEIKNESSFLDDLGADSLDMVELVMALEDEFETEIPDEEAEKITTVQQAVDYINSHGKQ</sequence>
<keyword id="KW-0963">Cytoplasm</keyword>
<keyword id="KW-0275">Fatty acid biosynthesis</keyword>
<keyword id="KW-0276">Fatty acid metabolism</keyword>
<keyword id="KW-0444">Lipid biosynthesis</keyword>
<keyword id="KW-0443">Lipid metabolism</keyword>
<keyword id="KW-0596">Phosphopantetheine</keyword>
<keyword id="KW-0597">Phosphoprotein</keyword>
<proteinExistence type="inferred from homology"/>
<organism>
    <name type="scientific">Bordetella parapertussis (strain 12822 / ATCC BAA-587 / NCTC 13253)</name>
    <dbReference type="NCBI Taxonomy" id="257311"/>
    <lineage>
        <taxon>Bacteria</taxon>
        <taxon>Pseudomonadati</taxon>
        <taxon>Pseudomonadota</taxon>
        <taxon>Betaproteobacteria</taxon>
        <taxon>Burkholderiales</taxon>
        <taxon>Alcaligenaceae</taxon>
        <taxon>Bordetella</taxon>
    </lineage>
</organism>
<comment type="function">
    <text evidence="1">Carrier of the growing fatty acid chain in fatty acid biosynthesis.</text>
</comment>
<comment type="pathway">
    <text evidence="1">Lipid metabolism; fatty acid biosynthesis.</text>
</comment>
<comment type="subcellular location">
    <subcellularLocation>
        <location evidence="1">Cytoplasm</location>
    </subcellularLocation>
</comment>
<comment type="PTM">
    <text evidence="1">4'-phosphopantetheine is transferred from CoA to a specific serine of apo-ACP by AcpS. This modification is essential for activity because fatty acids are bound in thioester linkage to the sulfhydryl of the prosthetic group.</text>
</comment>
<comment type="similarity">
    <text evidence="1">Belongs to the acyl carrier protein (ACP) family.</text>
</comment>
<comment type="sequence caution" evidence="3">
    <conflict type="erroneous initiation">
        <sequence resource="EMBL-CDS" id="CAE38589"/>
    </conflict>
</comment>
<dbReference type="EMBL" id="BX640433">
    <property type="protein sequence ID" value="CAE38589.1"/>
    <property type="status" value="ALT_INIT"/>
    <property type="molecule type" value="Genomic_DNA"/>
</dbReference>
<dbReference type="RefSeq" id="WP_012248678.1">
    <property type="nucleotide sequence ID" value="NC_002928.3"/>
</dbReference>
<dbReference type="SMR" id="Q7W5I7"/>
<dbReference type="GeneID" id="93205086"/>
<dbReference type="KEGG" id="bpa:BPP3304"/>
<dbReference type="HOGENOM" id="CLU_108696_1_3_4"/>
<dbReference type="UniPathway" id="UPA00094"/>
<dbReference type="Proteomes" id="UP000001421">
    <property type="component" value="Chromosome"/>
</dbReference>
<dbReference type="GO" id="GO:0005829">
    <property type="term" value="C:cytosol"/>
    <property type="evidence" value="ECO:0007669"/>
    <property type="project" value="TreeGrafter"/>
</dbReference>
<dbReference type="GO" id="GO:0016020">
    <property type="term" value="C:membrane"/>
    <property type="evidence" value="ECO:0007669"/>
    <property type="project" value="GOC"/>
</dbReference>
<dbReference type="GO" id="GO:0000035">
    <property type="term" value="F:acyl binding"/>
    <property type="evidence" value="ECO:0007669"/>
    <property type="project" value="TreeGrafter"/>
</dbReference>
<dbReference type="GO" id="GO:0000036">
    <property type="term" value="F:acyl carrier activity"/>
    <property type="evidence" value="ECO:0007669"/>
    <property type="project" value="UniProtKB-UniRule"/>
</dbReference>
<dbReference type="GO" id="GO:0009245">
    <property type="term" value="P:lipid A biosynthetic process"/>
    <property type="evidence" value="ECO:0007669"/>
    <property type="project" value="TreeGrafter"/>
</dbReference>
<dbReference type="FunFam" id="1.10.1200.10:FF:000001">
    <property type="entry name" value="Acyl carrier protein"/>
    <property type="match status" value="1"/>
</dbReference>
<dbReference type="Gene3D" id="1.10.1200.10">
    <property type="entry name" value="ACP-like"/>
    <property type="match status" value="1"/>
</dbReference>
<dbReference type="HAMAP" id="MF_01217">
    <property type="entry name" value="Acyl_carrier"/>
    <property type="match status" value="1"/>
</dbReference>
<dbReference type="InterPro" id="IPR003231">
    <property type="entry name" value="ACP"/>
</dbReference>
<dbReference type="InterPro" id="IPR036736">
    <property type="entry name" value="ACP-like_sf"/>
</dbReference>
<dbReference type="InterPro" id="IPR009081">
    <property type="entry name" value="PP-bd_ACP"/>
</dbReference>
<dbReference type="InterPro" id="IPR006162">
    <property type="entry name" value="Ppantetheine_attach_site"/>
</dbReference>
<dbReference type="NCBIfam" id="TIGR00517">
    <property type="entry name" value="acyl_carrier"/>
    <property type="match status" value="1"/>
</dbReference>
<dbReference type="NCBIfam" id="NF002148">
    <property type="entry name" value="PRK00982.1-2"/>
    <property type="match status" value="1"/>
</dbReference>
<dbReference type="NCBIfam" id="NF002149">
    <property type="entry name" value="PRK00982.1-3"/>
    <property type="match status" value="1"/>
</dbReference>
<dbReference type="NCBIfam" id="NF002150">
    <property type="entry name" value="PRK00982.1-4"/>
    <property type="match status" value="1"/>
</dbReference>
<dbReference type="NCBIfam" id="NF002151">
    <property type="entry name" value="PRK00982.1-5"/>
    <property type="match status" value="1"/>
</dbReference>
<dbReference type="PANTHER" id="PTHR20863">
    <property type="entry name" value="ACYL CARRIER PROTEIN"/>
    <property type="match status" value="1"/>
</dbReference>
<dbReference type="PANTHER" id="PTHR20863:SF76">
    <property type="entry name" value="CARRIER DOMAIN-CONTAINING PROTEIN"/>
    <property type="match status" value="1"/>
</dbReference>
<dbReference type="Pfam" id="PF00550">
    <property type="entry name" value="PP-binding"/>
    <property type="match status" value="1"/>
</dbReference>
<dbReference type="SUPFAM" id="SSF47336">
    <property type="entry name" value="ACP-like"/>
    <property type="match status" value="1"/>
</dbReference>
<dbReference type="PROSITE" id="PS50075">
    <property type="entry name" value="CARRIER"/>
    <property type="match status" value="1"/>
</dbReference>
<dbReference type="PROSITE" id="PS00012">
    <property type="entry name" value="PHOSPHOPANTETHEINE"/>
    <property type="match status" value="1"/>
</dbReference>
<protein>
    <recommendedName>
        <fullName evidence="1">Acyl carrier protein</fullName>
        <shortName evidence="1">ACP</shortName>
    </recommendedName>
</protein>
<reference key="1">
    <citation type="journal article" date="2003" name="Nat. Genet.">
        <title>Comparative analysis of the genome sequences of Bordetella pertussis, Bordetella parapertussis and Bordetella bronchiseptica.</title>
        <authorList>
            <person name="Parkhill J."/>
            <person name="Sebaihia M."/>
            <person name="Preston A."/>
            <person name="Murphy L.D."/>
            <person name="Thomson N.R."/>
            <person name="Harris D.E."/>
            <person name="Holden M.T.G."/>
            <person name="Churcher C.M."/>
            <person name="Bentley S.D."/>
            <person name="Mungall K.L."/>
            <person name="Cerdeno-Tarraga A.-M."/>
            <person name="Temple L."/>
            <person name="James K.D."/>
            <person name="Harris B."/>
            <person name="Quail M.A."/>
            <person name="Achtman M."/>
            <person name="Atkin R."/>
            <person name="Baker S."/>
            <person name="Basham D."/>
            <person name="Bason N."/>
            <person name="Cherevach I."/>
            <person name="Chillingworth T."/>
            <person name="Collins M."/>
            <person name="Cronin A."/>
            <person name="Davis P."/>
            <person name="Doggett J."/>
            <person name="Feltwell T."/>
            <person name="Goble A."/>
            <person name="Hamlin N."/>
            <person name="Hauser H."/>
            <person name="Holroyd S."/>
            <person name="Jagels K."/>
            <person name="Leather S."/>
            <person name="Moule S."/>
            <person name="Norberczak H."/>
            <person name="O'Neil S."/>
            <person name="Ormond D."/>
            <person name="Price C."/>
            <person name="Rabbinowitsch E."/>
            <person name="Rutter S."/>
            <person name="Sanders M."/>
            <person name="Saunders D."/>
            <person name="Seeger K."/>
            <person name="Sharp S."/>
            <person name="Simmonds M."/>
            <person name="Skelton J."/>
            <person name="Squares R."/>
            <person name="Squares S."/>
            <person name="Stevens K."/>
            <person name="Unwin L."/>
            <person name="Whitehead S."/>
            <person name="Barrell B.G."/>
            <person name="Maskell D.J."/>
        </authorList>
    </citation>
    <scope>NUCLEOTIDE SEQUENCE [LARGE SCALE GENOMIC DNA]</scope>
    <source>
        <strain>12822 / ATCC BAA-587 / NCTC 13253</strain>
    </source>
</reference>
<feature type="chain" id="PRO_0000180112" description="Acyl carrier protein">
    <location>
        <begin position="1"/>
        <end position="79"/>
    </location>
</feature>
<feature type="domain" description="Carrier" evidence="2">
    <location>
        <begin position="2"/>
        <end position="77"/>
    </location>
</feature>
<feature type="modified residue" description="O-(pantetheine 4'-phosphoryl)serine" evidence="2">
    <location>
        <position position="37"/>
    </location>
</feature>